<feature type="chain" id="PRO_1000057639" description="DNA mismatch repair protein MutS">
    <location>
        <begin position="1"/>
        <end position="851"/>
    </location>
</feature>
<feature type="binding site" evidence="1">
    <location>
        <begin position="614"/>
        <end position="621"/>
    </location>
    <ligand>
        <name>ATP</name>
        <dbReference type="ChEBI" id="CHEBI:30616"/>
    </ligand>
</feature>
<gene>
    <name evidence="1" type="primary">mutS</name>
    <name type="ordered locus">YpsIP31758_3292</name>
</gene>
<organism>
    <name type="scientific">Yersinia pseudotuberculosis serotype O:1b (strain IP 31758)</name>
    <dbReference type="NCBI Taxonomy" id="349747"/>
    <lineage>
        <taxon>Bacteria</taxon>
        <taxon>Pseudomonadati</taxon>
        <taxon>Pseudomonadota</taxon>
        <taxon>Gammaproteobacteria</taxon>
        <taxon>Enterobacterales</taxon>
        <taxon>Yersiniaceae</taxon>
        <taxon>Yersinia</taxon>
    </lineage>
</organism>
<proteinExistence type="inferred from homology"/>
<sequence length="851" mass="94786">MKNNDKLDSHTPMMQQYLRLKAQHPEILLFYRMGDFYELFYSDAKRASQLLDISLTKRGASAGEPIPMAGVPYHSIENYLAKLVQLGESAAICEQIGDPATSKGPVERKVVRIVTPGTISDEALLQERQDNLLAAIWQDAKGFGYATLDISSGRFRVAEPADLETMAAELQRTNPAELLYPENFEPMSLIEHRHGLRRRPLWEFELDTAKQQLNLQFGTRDLIGFGVEQAHLALRAAGCLLQYVKDTQRTSLPHIRGLTMERQQDGIIMDAATRRNLELTQNLSGGSENTLAAILDCSVTPMGSRMLKRWLHMPIRDIRVLTDRQQAIGGLQDIAAELQTPLRQVGDLERILARLALRTARPRDLARMRHAFQQLPEIHRLLQPIDVPHVQNLLSQVGQFDELQDLLERAIVETPPVLVRDGGVIASGYNAELDEWRALADGATDYLDRLEIREREKLGLDTLKVGFNGVHGYYIQVSRGQSHLVPIHYVRRQTLKNAERYIIPELKEYEDKVLTSKGKALAIEKGLYEEIFDLLLPHLPELQLSANALAELDVLANLAERAETLNYSCPTLSDKPGIKIMGGRHPVVEQVLKEPFISNPLTLSPQRRMLIITGPNMGGKSTYMRQTALIVLLAHLGSYVPADQATIGPIDRIFTRVGAADDLASGRSTFMVEMTETANILHNATEQSLVLMDEIGRGTSTYDGLSLAWACAENLASRIKAMTLFATHYFELTTLPEKMEGVANVHLDALEHGETIAFMHSVQEGAASKSYGLAVAALAGVPRDVIKRARQKLKELESLSNNAAASTIDGSQMTLLNEEIPPAVEALEALDPDSLSPRQALEWIYRLKNMV</sequence>
<comment type="function">
    <text evidence="1">This protein is involved in the repair of mismatches in DNA. It is possible that it carries out the mismatch recognition step. This protein has a weak ATPase activity.</text>
</comment>
<comment type="similarity">
    <text evidence="1">Belongs to the DNA mismatch repair MutS family.</text>
</comment>
<accession>A7FLX1</accession>
<dbReference type="EMBL" id="CP000720">
    <property type="protein sequence ID" value="ABS47648.1"/>
    <property type="molecule type" value="Genomic_DNA"/>
</dbReference>
<dbReference type="RefSeq" id="WP_011191781.1">
    <property type="nucleotide sequence ID" value="NC_009708.1"/>
</dbReference>
<dbReference type="SMR" id="A7FLX1"/>
<dbReference type="KEGG" id="ypi:YpsIP31758_3292"/>
<dbReference type="HOGENOM" id="CLU_002472_4_0_6"/>
<dbReference type="Proteomes" id="UP000002412">
    <property type="component" value="Chromosome"/>
</dbReference>
<dbReference type="GO" id="GO:0005829">
    <property type="term" value="C:cytosol"/>
    <property type="evidence" value="ECO:0007669"/>
    <property type="project" value="TreeGrafter"/>
</dbReference>
<dbReference type="GO" id="GO:0005524">
    <property type="term" value="F:ATP binding"/>
    <property type="evidence" value="ECO:0007669"/>
    <property type="project" value="UniProtKB-UniRule"/>
</dbReference>
<dbReference type="GO" id="GO:0140664">
    <property type="term" value="F:ATP-dependent DNA damage sensor activity"/>
    <property type="evidence" value="ECO:0007669"/>
    <property type="project" value="InterPro"/>
</dbReference>
<dbReference type="GO" id="GO:0003684">
    <property type="term" value="F:damaged DNA binding"/>
    <property type="evidence" value="ECO:0007669"/>
    <property type="project" value="UniProtKB-UniRule"/>
</dbReference>
<dbReference type="GO" id="GO:0030983">
    <property type="term" value="F:mismatched DNA binding"/>
    <property type="evidence" value="ECO:0007669"/>
    <property type="project" value="InterPro"/>
</dbReference>
<dbReference type="GO" id="GO:0006298">
    <property type="term" value="P:mismatch repair"/>
    <property type="evidence" value="ECO:0007669"/>
    <property type="project" value="UniProtKB-UniRule"/>
</dbReference>
<dbReference type="CDD" id="cd03284">
    <property type="entry name" value="ABC_MutS1"/>
    <property type="match status" value="1"/>
</dbReference>
<dbReference type="FunFam" id="1.10.1420.10:FF:000002">
    <property type="entry name" value="DNA mismatch repair protein MutS"/>
    <property type="match status" value="1"/>
</dbReference>
<dbReference type="FunFam" id="3.30.420.110:FF:000001">
    <property type="entry name" value="DNA mismatch repair protein MutS"/>
    <property type="match status" value="1"/>
</dbReference>
<dbReference type="FunFam" id="3.40.1170.10:FF:000001">
    <property type="entry name" value="DNA mismatch repair protein MutS"/>
    <property type="match status" value="1"/>
</dbReference>
<dbReference type="FunFam" id="3.40.50.300:FF:000283">
    <property type="entry name" value="DNA mismatch repair protein MutS"/>
    <property type="match status" value="1"/>
</dbReference>
<dbReference type="Gene3D" id="1.10.1420.10">
    <property type="match status" value="2"/>
</dbReference>
<dbReference type="Gene3D" id="6.10.140.430">
    <property type="match status" value="1"/>
</dbReference>
<dbReference type="Gene3D" id="3.40.1170.10">
    <property type="entry name" value="DNA repair protein MutS, domain I"/>
    <property type="match status" value="1"/>
</dbReference>
<dbReference type="Gene3D" id="3.30.420.110">
    <property type="entry name" value="MutS, connector domain"/>
    <property type="match status" value="1"/>
</dbReference>
<dbReference type="Gene3D" id="3.40.50.300">
    <property type="entry name" value="P-loop containing nucleotide triphosphate hydrolases"/>
    <property type="match status" value="1"/>
</dbReference>
<dbReference type="HAMAP" id="MF_00096">
    <property type="entry name" value="MutS"/>
    <property type="match status" value="1"/>
</dbReference>
<dbReference type="InterPro" id="IPR005748">
    <property type="entry name" value="DNA_mismatch_repair_MutS"/>
</dbReference>
<dbReference type="InterPro" id="IPR007695">
    <property type="entry name" value="DNA_mismatch_repair_MutS-lik_N"/>
</dbReference>
<dbReference type="InterPro" id="IPR017261">
    <property type="entry name" value="DNA_mismatch_repair_MutS/MSH"/>
</dbReference>
<dbReference type="InterPro" id="IPR000432">
    <property type="entry name" value="DNA_mismatch_repair_MutS_C"/>
</dbReference>
<dbReference type="InterPro" id="IPR007861">
    <property type="entry name" value="DNA_mismatch_repair_MutS_clamp"/>
</dbReference>
<dbReference type="InterPro" id="IPR007696">
    <property type="entry name" value="DNA_mismatch_repair_MutS_core"/>
</dbReference>
<dbReference type="InterPro" id="IPR016151">
    <property type="entry name" value="DNA_mismatch_repair_MutS_N"/>
</dbReference>
<dbReference type="InterPro" id="IPR036187">
    <property type="entry name" value="DNA_mismatch_repair_MutS_sf"/>
</dbReference>
<dbReference type="InterPro" id="IPR007860">
    <property type="entry name" value="DNA_mmatch_repair_MutS_con_dom"/>
</dbReference>
<dbReference type="InterPro" id="IPR045076">
    <property type="entry name" value="MutS"/>
</dbReference>
<dbReference type="InterPro" id="IPR036678">
    <property type="entry name" value="MutS_con_dom_sf"/>
</dbReference>
<dbReference type="InterPro" id="IPR027417">
    <property type="entry name" value="P-loop_NTPase"/>
</dbReference>
<dbReference type="NCBIfam" id="TIGR01070">
    <property type="entry name" value="mutS1"/>
    <property type="match status" value="1"/>
</dbReference>
<dbReference type="NCBIfam" id="NF003810">
    <property type="entry name" value="PRK05399.1"/>
    <property type="match status" value="1"/>
</dbReference>
<dbReference type="PANTHER" id="PTHR11361:SF34">
    <property type="entry name" value="DNA MISMATCH REPAIR PROTEIN MSH1, MITOCHONDRIAL"/>
    <property type="match status" value="1"/>
</dbReference>
<dbReference type="PANTHER" id="PTHR11361">
    <property type="entry name" value="DNA MISMATCH REPAIR PROTEIN MUTS FAMILY MEMBER"/>
    <property type="match status" value="1"/>
</dbReference>
<dbReference type="Pfam" id="PF01624">
    <property type="entry name" value="MutS_I"/>
    <property type="match status" value="1"/>
</dbReference>
<dbReference type="Pfam" id="PF05188">
    <property type="entry name" value="MutS_II"/>
    <property type="match status" value="1"/>
</dbReference>
<dbReference type="Pfam" id="PF05192">
    <property type="entry name" value="MutS_III"/>
    <property type="match status" value="1"/>
</dbReference>
<dbReference type="Pfam" id="PF05190">
    <property type="entry name" value="MutS_IV"/>
    <property type="match status" value="1"/>
</dbReference>
<dbReference type="Pfam" id="PF00488">
    <property type="entry name" value="MutS_V"/>
    <property type="match status" value="1"/>
</dbReference>
<dbReference type="PIRSF" id="PIRSF037677">
    <property type="entry name" value="DNA_mis_repair_Msh6"/>
    <property type="match status" value="1"/>
</dbReference>
<dbReference type="SMART" id="SM00534">
    <property type="entry name" value="MUTSac"/>
    <property type="match status" value="1"/>
</dbReference>
<dbReference type="SMART" id="SM00533">
    <property type="entry name" value="MUTSd"/>
    <property type="match status" value="1"/>
</dbReference>
<dbReference type="SUPFAM" id="SSF55271">
    <property type="entry name" value="DNA repair protein MutS, domain I"/>
    <property type="match status" value="1"/>
</dbReference>
<dbReference type="SUPFAM" id="SSF53150">
    <property type="entry name" value="DNA repair protein MutS, domain II"/>
    <property type="match status" value="1"/>
</dbReference>
<dbReference type="SUPFAM" id="SSF48334">
    <property type="entry name" value="DNA repair protein MutS, domain III"/>
    <property type="match status" value="1"/>
</dbReference>
<dbReference type="SUPFAM" id="SSF52540">
    <property type="entry name" value="P-loop containing nucleoside triphosphate hydrolases"/>
    <property type="match status" value="1"/>
</dbReference>
<dbReference type="PROSITE" id="PS00486">
    <property type="entry name" value="DNA_MISMATCH_REPAIR_2"/>
    <property type="match status" value="1"/>
</dbReference>
<reference key="1">
    <citation type="journal article" date="2007" name="PLoS Genet.">
        <title>The complete genome sequence of Yersinia pseudotuberculosis IP31758, the causative agent of Far East scarlet-like fever.</title>
        <authorList>
            <person name="Eppinger M."/>
            <person name="Rosovitz M.J."/>
            <person name="Fricke W.F."/>
            <person name="Rasko D.A."/>
            <person name="Kokorina G."/>
            <person name="Fayolle C."/>
            <person name="Lindler L.E."/>
            <person name="Carniel E."/>
            <person name="Ravel J."/>
        </authorList>
    </citation>
    <scope>NUCLEOTIDE SEQUENCE [LARGE SCALE GENOMIC DNA]</scope>
    <source>
        <strain>IP 31758</strain>
    </source>
</reference>
<protein>
    <recommendedName>
        <fullName evidence="1">DNA mismatch repair protein MutS</fullName>
    </recommendedName>
</protein>
<name>MUTS_YERP3</name>
<keyword id="KW-0067">ATP-binding</keyword>
<keyword id="KW-0227">DNA damage</keyword>
<keyword id="KW-0234">DNA repair</keyword>
<keyword id="KW-0238">DNA-binding</keyword>
<keyword id="KW-0547">Nucleotide-binding</keyword>
<evidence type="ECO:0000255" key="1">
    <source>
        <dbReference type="HAMAP-Rule" id="MF_00096"/>
    </source>
</evidence>